<protein>
    <recommendedName>
        <fullName>Class B acid phosphatase</fullName>
        <shortName>CBAP</shortName>
        <ecNumber evidence="2">3.1.3.2</ecNumber>
    </recommendedName>
</protein>
<accession>P44009</accession>
<accession>P44730</accession>
<accession>P77869</accession>
<proteinExistence type="evidence at protein level"/>
<feature type="signal peptide" evidence="3">
    <location>
        <begin position="1"/>
        <end position="22"/>
    </location>
</feature>
<feature type="chain" id="PRO_0000024005" description="Class B acid phosphatase">
    <location>
        <begin position="23"/>
        <end position="236"/>
    </location>
</feature>
<feature type="active site" description="Nucleophile" evidence="2">
    <location>
        <position position="67"/>
    </location>
</feature>
<feature type="active site" description="Proton donor" evidence="2">
    <location>
        <position position="69"/>
    </location>
</feature>
<feature type="binding site" evidence="2">
    <location>
        <position position="67"/>
    </location>
    <ligand>
        <name>Mg(2+)</name>
        <dbReference type="ChEBI" id="CHEBI:18420"/>
    </ligand>
</feature>
<feature type="binding site" evidence="2">
    <location>
        <position position="69"/>
    </location>
    <ligand>
        <name>Mg(2+)</name>
        <dbReference type="ChEBI" id="CHEBI:18420"/>
    </ligand>
</feature>
<feature type="binding site" evidence="2">
    <location>
        <begin position="136"/>
        <end position="137"/>
    </location>
    <ligand>
        <name>substrate</name>
    </ligand>
</feature>
<feature type="binding site" evidence="2">
    <location>
        <position position="176"/>
    </location>
    <ligand>
        <name>substrate</name>
    </ligand>
</feature>
<feature type="binding site" evidence="2">
    <location>
        <position position="191"/>
    </location>
    <ligand>
        <name>Mg(2+)</name>
        <dbReference type="ChEBI" id="CHEBI:18420"/>
    </ligand>
</feature>
<feature type="sequence conflict" description="In Ref. 2; CAA68889." evidence="4" ref="2">
    <location>
        <position position="73"/>
    </location>
</feature>
<keyword id="KW-0378">Hydrolase</keyword>
<keyword id="KW-0460">Magnesium</keyword>
<keyword id="KW-0479">Metal-binding</keyword>
<keyword id="KW-0574">Periplasm</keyword>
<keyword id="KW-1185">Reference proteome</keyword>
<keyword id="KW-0732">Signal</keyword>
<reference key="1">
    <citation type="journal article" date="1995" name="Science">
        <title>Whole-genome random sequencing and assembly of Haemophilus influenzae Rd.</title>
        <authorList>
            <person name="Fleischmann R.D."/>
            <person name="Adams M.D."/>
            <person name="White O."/>
            <person name="Clayton R.A."/>
            <person name="Kirkness E.F."/>
            <person name="Kerlavage A.R."/>
            <person name="Bult C.J."/>
            <person name="Tomb J.-F."/>
            <person name="Dougherty B.A."/>
            <person name="Merrick J.M."/>
            <person name="McKenney K."/>
            <person name="Sutton G.G."/>
            <person name="FitzHugh W."/>
            <person name="Fields C.A."/>
            <person name="Gocayne J.D."/>
            <person name="Scott J.D."/>
            <person name="Shirley R."/>
            <person name="Liu L.-I."/>
            <person name="Glodek A."/>
            <person name="Kelley J.M."/>
            <person name="Weidman J.F."/>
            <person name="Phillips C.A."/>
            <person name="Spriggs T."/>
            <person name="Hedblom E."/>
            <person name="Cotton M.D."/>
            <person name="Utterback T.R."/>
            <person name="Hanna M.C."/>
            <person name="Nguyen D.T."/>
            <person name="Saudek D.M."/>
            <person name="Brandon R.C."/>
            <person name="Fine L.D."/>
            <person name="Fritchman J.L."/>
            <person name="Fuhrmann J.L."/>
            <person name="Geoghagen N.S.M."/>
            <person name="Gnehm C.L."/>
            <person name="McDonald L.A."/>
            <person name="Small K.V."/>
            <person name="Fraser C.M."/>
            <person name="Smith H.O."/>
            <person name="Venter J.C."/>
        </authorList>
    </citation>
    <scope>NUCLEOTIDE SEQUENCE [LARGE SCALE GENOMIC DNA]</scope>
    <source>
        <strain>ATCC 51907 / DSM 11121 / KW20 / Rd</strain>
    </source>
</reference>
<reference key="2">
    <citation type="submission" date="1996-08" db="EMBL/GenBank/DDBJ databases">
        <authorList>
            <person name="Rossolini G.M."/>
            <person name="Bonci A."/>
            <person name="Schippa S."/>
            <person name="Iori P."/>
            <person name="Thaller M.C."/>
        </authorList>
    </citation>
    <scope>NUCLEOTIDE SEQUENCE [GENOMIC DNA]</scope>
    <source>
        <strain>CCUG 7317/A</strain>
    </source>
</reference>
<reference key="3">
    <citation type="journal article" date="2000" name="Electrophoresis">
        <title>Two-dimensional map of the proteome of Haemophilus influenzae.</title>
        <authorList>
            <person name="Langen H."/>
            <person name="Takacs B."/>
            <person name="Evers S."/>
            <person name="Berndt P."/>
            <person name="Lahm H.W."/>
            <person name="Wipf B."/>
            <person name="Gray C."/>
            <person name="Fountoulakis M."/>
        </authorList>
    </citation>
    <scope>IDENTIFICATION BY MASS SPECTROMETRY</scope>
    <source>
        <strain>ATCC 51907 / DSM 11121 / KW20 / Rd</strain>
    </source>
</reference>
<organism>
    <name type="scientific">Haemophilus influenzae (strain ATCC 51907 / DSM 11121 / KW20 / Rd)</name>
    <dbReference type="NCBI Taxonomy" id="71421"/>
    <lineage>
        <taxon>Bacteria</taxon>
        <taxon>Pseudomonadati</taxon>
        <taxon>Pseudomonadota</taxon>
        <taxon>Gammaproteobacteria</taxon>
        <taxon>Pasteurellales</taxon>
        <taxon>Pasteurellaceae</taxon>
        <taxon>Haemophilus</taxon>
    </lineage>
</organism>
<comment type="function">
    <text evidence="1">Dephosphorylates several organic phosphate monoesters. Also has a phosphotransferase activity catalyzing the transfer of low-energy phosphate groups from organic phosphate monoesters to free hydroxyl groups of various organic compounds (By similarity).</text>
</comment>
<comment type="catalytic activity">
    <reaction evidence="2">
        <text>a phosphate monoester + H2O = an alcohol + phosphate</text>
        <dbReference type="Rhea" id="RHEA:15017"/>
        <dbReference type="ChEBI" id="CHEBI:15377"/>
        <dbReference type="ChEBI" id="CHEBI:30879"/>
        <dbReference type="ChEBI" id="CHEBI:43474"/>
        <dbReference type="ChEBI" id="CHEBI:67140"/>
        <dbReference type="EC" id="3.1.3.2"/>
    </reaction>
</comment>
<comment type="cofactor">
    <cofactor evidence="2">
        <name>Mg(2+)</name>
        <dbReference type="ChEBI" id="CHEBI:18420"/>
    </cofactor>
    <text evidence="2">Binds 1 Mg(2+) ion per subunit.</text>
</comment>
<comment type="subunit">
    <text evidence="1">Homotetramer.</text>
</comment>
<comment type="subcellular location">
    <subcellularLocation>
        <location evidence="1">Periplasm</location>
    </subcellularLocation>
</comment>
<comment type="similarity">
    <text evidence="4">Belongs to the class B bacterial acid phosphatase family.</text>
</comment>
<comment type="sequence caution" evidence="4">
    <conflict type="frameshift">
        <sequence resource="EMBL-CDS" id="AAC22151"/>
    </conflict>
    <text>Produces two separate ORFs.</text>
</comment>
<comment type="sequence caution" evidence="4">
    <conflict type="frameshift">
        <sequence resource="EMBL-CDS" id="AAC22152"/>
    </conflict>
    <text>Produces two separate ORFs.</text>
</comment>
<sequence length="236" mass="26271">MKNVMKLSVIALLTAAAVPAMAGKTEPYTQSGTNAREMLQEQAIHWISVDQIKQSLEGKAPINVSFDIDDTVMLFSSPCFYHGQQKFSPGKHDYLKNQDFWNEVNAGCDKYSIPKQIAIDLINMHQARGDQVYFFTGRTAGKVDGVTPILEKTFNIKNMHPVEFMGSRERTTKYNKTPAIISHKVSIHYGDSDDDVLAAKEAGVRGIRLMRAANSTYQPMPTLGGYGEEVLINSSY</sequence>
<dbReference type="EC" id="3.1.3.2" evidence="2"/>
<dbReference type="EMBL" id="L42023">
    <property type="protein sequence ID" value="AAC22151.1"/>
    <property type="status" value="ALT_FRAME"/>
    <property type="molecule type" value="Genomic_DNA"/>
</dbReference>
<dbReference type="EMBL" id="L42023">
    <property type="protein sequence ID" value="AAC22152.1"/>
    <property type="status" value="ALT_FRAME"/>
    <property type="molecule type" value="Genomic_DNA"/>
</dbReference>
<dbReference type="EMBL" id="Y07615">
    <property type="protein sequence ID" value="CAA68889.1"/>
    <property type="molecule type" value="Genomic_DNA"/>
</dbReference>
<dbReference type="PIR" id="T09434">
    <property type="entry name" value="T09434"/>
</dbReference>
<dbReference type="RefSeq" id="NP_438653.1">
    <property type="nucleotide sequence ID" value="NC_000907.1"/>
</dbReference>
<dbReference type="SMR" id="P44009"/>
<dbReference type="STRING" id="71421.HI_0494"/>
<dbReference type="EnsemblBacteria" id="AAC22151">
    <property type="protein sequence ID" value="AAC22151"/>
    <property type="gene ID" value="HI_0494"/>
</dbReference>
<dbReference type="EnsemblBacteria" id="AAC22152">
    <property type="protein sequence ID" value="AAC22152"/>
    <property type="gene ID" value="HI_0495"/>
</dbReference>
<dbReference type="KEGG" id="hin:HI_0494"/>
<dbReference type="KEGG" id="hin:HI_0495"/>
<dbReference type="PATRIC" id="fig|71421.8.peg.512"/>
<dbReference type="eggNOG" id="COG3700">
    <property type="taxonomic scope" value="Bacteria"/>
</dbReference>
<dbReference type="HOGENOM" id="CLU_081496_0_0_6"/>
<dbReference type="OrthoDB" id="2234478at2"/>
<dbReference type="PhylomeDB" id="P44009"/>
<dbReference type="Proteomes" id="UP000000579">
    <property type="component" value="Chromosome"/>
</dbReference>
<dbReference type="GO" id="GO:0030288">
    <property type="term" value="C:outer membrane-bounded periplasmic space"/>
    <property type="evidence" value="ECO:0007669"/>
    <property type="project" value="InterPro"/>
</dbReference>
<dbReference type="GO" id="GO:0003993">
    <property type="term" value="F:acid phosphatase activity"/>
    <property type="evidence" value="ECO:0007669"/>
    <property type="project" value="UniProtKB-EC"/>
</dbReference>
<dbReference type="GO" id="GO:0046872">
    <property type="term" value="F:metal ion binding"/>
    <property type="evidence" value="ECO:0007669"/>
    <property type="project" value="UniProtKB-KW"/>
</dbReference>
<dbReference type="CDD" id="cd07499">
    <property type="entry name" value="HAD_CBAP"/>
    <property type="match status" value="1"/>
</dbReference>
<dbReference type="Gene3D" id="3.40.50.1000">
    <property type="entry name" value="HAD superfamily/HAD-like"/>
    <property type="match status" value="1"/>
</dbReference>
<dbReference type="InterPro" id="IPR005519">
    <property type="entry name" value="Acid_phosphat_B-like"/>
</dbReference>
<dbReference type="InterPro" id="IPR036412">
    <property type="entry name" value="HAD-like_sf"/>
</dbReference>
<dbReference type="InterPro" id="IPR010025">
    <property type="entry name" value="HAD-SF_ppase_IIIB_AphA"/>
</dbReference>
<dbReference type="InterPro" id="IPR023214">
    <property type="entry name" value="HAD_sf"/>
</dbReference>
<dbReference type="NCBIfam" id="TIGR01672">
    <property type="entry name" value="AphA"/>
    <property type="match status" value="1"/>
</dbReference>
<dbReference type="Pfam" id="PF03767">
    <property type="entry name" value="Acid_phosphat_B"/>
    <property type="match status" value="1"/>
</dbReference>
<dbReference type="PIRSF" id="PIRSF017818">
    <property type="entry name" value="Acid_Ptase_B"/>
    <property type="match status" value="1"/>
</dbReference>
<dbReference type="SFLD" id="SFLDG01127">
    <property type="entry name" value="C1.3:_Acid_Phosphatase_Like"/>
    <property type="match status" value="1"/>
</dbReference>
<dbReference type="SFLD" id="SFLDS00003">
    <property type="entry name" value="Haloacid_Dehalogenase"/>
    <property type="match status" value="1"/>
</dbReference>
<dbReference type="SUPFAM" id="SSF56784">
    <property type="entry name" value="HAD-like"/>
    <property type="match status" value="1"/>
</dbReference>
<name>APHA_HAEIN</name>
<gene>
    <name type="primary">aphA</name>
    <name type="synonym">napA</name>
    <name type="ordered locus">HI_0494/HI_0495</name>
</gene>
<evidence type="ECO:0000250" key="1"/>
<evidence type="ECO:0000250" key="2">
    <source>
        <dbReference type="UniProtKB" id="Q540U1"/>
    </source>
</evidence>
<evidence type="ECO:0000255" key="3"/>
<evidence type="ECO:0000305" key="4"/>